<dbReference type="EC" id="2.1.1.297"/>
<dbReference type="EC" id="2.1.1.33"/>
<dbReference type="EMBL" id="CP000087">
    <property type="protein sequence ID" value="ABE05324.1"/>
    <property type="molecule type" value="Genomic_DNA"/>
</dbReference>
<dbReference type="SMR" id="Q1RH40"/>
<dbReference type="KEGG" id="rbe:RBE_1243"/>
<dbReference type="eggNOG" id="COG0220">
    <property type="taxonomic scope" value="Bacteria"/>
</dbReference>
<dbReference type="eggNOG" id="COG2890">
    <property type="taxonomic scope" value="Bacteria"/>
</dbReference>
<dbReference type="HOGENOM" id="CLU_018398_3_3_5"/>
<dbReference type="OrthoDB" id="9800643at2"/>
<dbReference type="Proteomes" id="UP000001951">
    <property type="component" value="Chromosome"/>
</dbReference>
<dbReference type="GO" id="GO:0003676">
    <property type="term" value="F:nucleic acid binding"/>
    <property type="evidence" value="ECO:0007669"/>
    <property type="project" value="InterPro"/>
</dbReference>
<dbReference type="GO" id="GO:0102559">
    <property type="term" value="F:protein-(glutamine-N5) methyltransferase activity"/>
    <property type="evidence" value="ECO:0007669"/>
    <property type="project" value="UniProtKB-EC"/>
</dbReference>
<dbReference type="GO" id="GO:0036009">
    <property type="term" value="F:protein-glutamine N-methyltransferase activity"/>
    <property type="evidence" value="ECO:0007669"/>
    <property type="project" value="UniProtKB-UniRule"/>
</dbReference>
<dbReference type="GO" id="GO:0008176">
    <property type="term" value="F:tRNA (guanine(46)-N7)-methyltransferase activity"/>
    <property type="evidence" value="ECO:0007669"/>
    <property type="project" value="UniProtKB-UniRule"/>
</dbReference>
<dbReference type="CDD" id="cd02440">
    <property type="entry name" value="AdoMet_MTases"/>
    <property type="match status" value="1"/>
</dbReference>
<dbReference type="Gene3D" id="1.10.8.10">
    <property type="entry name" value="DNA helicase RuvA subunit, C-terminal domain"/>
    <property type="match status" value="1"/>
</dbReference>
<dbReference type="Gene3D" id="3.40.50.150">
    <property type="entry name" value="Vaccinia Virus protein VP39"/>
    <property type="match status" value="2"/>
</dbReference>
<dbReference type="HAMAP" id="MF_02126">
    <property type="entry name" value="RF_methyltr_PrmC"/>
    <property type="match status" value="1"/>
</dbReference>
<dbReference type="HAMAP" id="MF_01057">
    <property type="entry name" value="tRNA_methyltr_TrmB"/>
    <property type="match status" value="1"/>
</dbReference>
<dbReference type="InterPro" id="IPR002052">
    <property type="entry name" value="DNA_methylase_N6_adenine_CS"/>
</dbReference>
<dbReference type="InterPro" id="IPR004556">
    <property type="entry name" value="HemK-like"/>
</dbReference>
<dbReference type="InterPro" id="IPR050320">
    <property type="entry name" value="N5-glutamine_MTase"/>
</dbReference>
<dbReference type="InterPro" id="IPR040758">
    <property type="entry name" value="PrmC_N"/>
</dbReference>
<dbReference type="InterPro" id="IPR019874">
    <property type="entry name" value="RF_methyltr_PrmC"/>
</dbReference>
<dbReference type="InterPro" id="IPR022438">
    <property type="entry name" value="RPE5"/>
</dbReference>
<dbReference type="InterPro" id="IPR029063">
    <property type="entry name" value="SAM-dependent_MTases_sf"/>
</dbReference>
<dbReference type="InterPro" id="IPR007848">
    <property type="entry name" value="Small_mtfrase_dom"/>
</dbReference>
<dbReference type="InterPro" id="IPR003358">
    <property type="entry name" value="tRNA_(Gua-N-7)_MeTrfase_Trmb"/>
</dbReference>
<dbReference type="InterPro" id="IPR055361">
    <property type="entry name" value="tRNA_methyltr_TrmB_bact"/>
</dbReference>
<dbReference type="NCBIfam" id="TIGR00536">
    <property type="entry name" value="hemK_fam"/>
    <property type="match status" value="1"/>
</dbReference>
<dbReference type="NCBIfam" id="NF002421">
    <property type="entry name" value="PRK01544.1"/>
    <property type="match status" value="1"/>
</dbReference>
<dbReference type="NCBIfam" id="TIGR03534">
    <property type="entry name" value="RF_mod_PrmC"/>
    <property type="match status" value="1"/>
</dbReference>
<dbReference type="NCBIfam" id="TIGR03776">
    <property type="entry name" value="RPE5"/>
    <property type="match status" value="1"/>
</dbReference>
<dbReference type="NCBIfam" id="TIGR00091">
    <property type="entry name" value="tRNA (guanosine(46)-N7)-methyltransferase TrmB"/>
    <property type="match status" value="1"/>
</dbReference>
<dbReference type="PANTHER" id="PTHR18895">
    <property type="entry name" value="HEMK METHYLTRANSFERASE"/>
    <property type="match status" value="1"/>
</dbReference>
<dbReference type="PANTHER" id="PTHR18895:SF74">
    <property type="entry name" value="MTRF1L RELEASE FACTOR GLUTAMINE METHYLTRANSFERASE"/>
    <property type="match status" value="1"/>
</dbReference>
<dbReference type="Pfam" id="PF02390">
    <property type="entry name" value="Methyltransf_4"/>
    <property type="match status" value="1"/>
</dbReference>
<dbReference type="Pfam" id="PF05175">
    <property type="entry name" value="MTS"/>
    <property type="match status" value="1"/>
</dbReference>
<dbReference type="Pfam" id="PF17827">
    <property type="entry name" value="PrmC_N"/>
    <property type="match status" value="1"/>
</dbReference>
<dbReference type="SUPFAM" id="SSF53335">
    <property type="entry name" value="S-adenosyl-L-methionine-dependent methyltransferases"/>
    <property type="match status" value="2"/>
</dbReference>
<dbReference type="PROSITE" id="PS51625">
    <property type="entry name" value="SAM_MT_TRMB"/>
    <property type="match status" value="1"/>
</dbReference>
<evidence type="ECO:0000250" key="1"/>
<evidence type="ECO:0000305" key="2"/>
<gene>
    <name type="primary">prmC/trmB</name>
    <name type="synonym">hemK</name>
    <name type="ordered locus">RBE_1243</name>
</gene>
<comment type="function">
    <text evidence="1">Methylates the class 1 translation termination release factors RF1/PrfA and RF2/PrfB on the glutamine residue of the universally conserved GGQ motif.</text>
</comment>
<comment type="function">
    <text evidence="1">Catalyzes the formation of N(7)-methylguanine at position 46 (m7G46) in tRNA.</text>
</comment>
<comment type="catalytic activity">
    <reaction>
        <text>L-glutaminyl-[peptide chain release factor] + S-adenosyl-L-methionine = N(5)-methyl-L-glutaminyl-[peptide chain release factor] + S-adenosyl-L-homocysteine + H(+)</text>
        <dbReference type="Rhea" id="RHEA:42896"/>
        <dbReference type="Rhea" id="RHEA-COMP:10271"/>
        <dbReference type="Rhea" id="RHEA-COMP:10272"/>
        <dbReference type="ChEBI" id="CHEBI:15378"/>
        <dbReference type="ChEBI" id="CHEBI:30011"/>
        <dbReference type="ChEBI" id="CHEBI:57856"/>
        <dbReference type="ChEBI" id="CHEBI:59789"/>
        <dbReference type="ChEBI" id="CHEBI:61891"/>
        <dbReference type="EC" id="2.1.1.297"/>
    </reaction>
</comment>
<comment type="catalytic activity">
    <reaction>
        <text>guanosine(46) in tRNA + S-adenosyl-L-methionine = N(7)-methylguanosine(46) in tRNA + S-adenosyl-L-homocysteine</text>
        <dbReference type="Rhea" id="RHEA:42708"/>
        <dbReference type="Rhea" id="RHEA-COMP:10188"/>
        <dbReference type="Rhea" id="RHEA-COMP:10189"/>
        <dbReference type="ChEBI" id="CHEBI:57856"/>
        <dbReference type="ChEBI" id="CHEBI:59789"/>
        <dbReference type="ChEBI" id="CHEBI:74269"/>
        <dbReference type="ChEBI" id="CHEBI:74480"/>
        <dbReference type="EC" id="2.1.1.33"/>
    </reaction>
</comment>
<comment type="similarity">
    <text evidence="2">In the C-terminal section; belongs to the class I-like SAM-binding methyltransferase superfamily. TrmB family.</text>
</comment>
<comment type="similarity">
    <text evidence="2">In the N-terminal section; belongs to the protein N5-glutamine methyltransferase family. PrmC subfamily.</text>
</comment>
<sequence length="556" mass="63993">MQYSIQKFLNEGAYKLQHIGINNPKLEARILLQHAINKPYEYLLANPEKQLNQLEIEAVEKVLERRLKHEPIAYILGTKEFYSREFIVNKHVLIPRNDTEILIDVVLQYHSQHSLCHSSNGGNPDKKQLDSVVKPRNNIKSSNILELGTGSGCISISLLLELPNSQITATDISIDAIEVAKSNAIKHDVTDRLQIIHSNWFENIGKQKFDLIVSNPPYISINEKPEMAIETINYEPSIALFAEEDGLLSYKIIAENAKKFLKQNGKIILEIGYKQADQVSQIFLDHGYVIDNIHQDLQSHNRVIEISLIQLNRSYARRIGKSLSGIQQNLLDNELPKYLFSKEKLIGKNYNSCKIKSNYTKFNLEKSKESVSRGAERIKIREHLRTYKEDVANFSSSTSIFLEIGFGMGEHFINQAKMNPDKLFIGVEVYLNGVANVLKLAEEQNITNFLLFPNNLDFILHDLPNNSLDRIYILFPDPWIKNRQKKKRILNKERLTILQTKLKNKGSLIFTSDIENYFEEVVELIKQNGNFQITNEDNYSKPHDNYIITKIPPKSY</sequence>
<organism>
    <name type="scientific">Rickettsia bellii (strain RML369-C)</name>
    <dbReference type="NCBI Taxonomy" id="336407"/>
    <lineage>
        <taxon>Bacteria</taxon>
        <taxon>Pseudomonadati</taxon>
        <taxon>Pseudomonadota</taxon>
        <taxon>Alphaproteobacteria</taxon>
        <taxon>Rickettsiales</taxon>
        <taxon>Rickettsiaceae</taxon>
        <taxon>Rickettsieae</taxon>
        <taxon>Rickettsia</taxon>
        <taxon>belli group</taxon>
    </lineage>
</organism>
<reference key="1">
    <citation type="journal article" date="2006" name="PLoS Genet.">
        <title>Genome sequence of Rickettsia bellii illuminates the role of amoebae in gene exchanges between intracellular pathogens.</title>
        <authorList>
            <person name="Ogata H."/>
            <person name="La Scola B."/>
            <person name="Audic S."/>
            <person name="Renesto P."/>
            <person name="Blanc G."/>
            <person name="Robert C."/>
            <person name="Fournier P.-E."/>
            <person name="Claverie J.-M."/>
            <person name="Raoult D."/>
        </authorList>
    </citation>
    <scope>NUCLEOTIDE SEQUENCE [LARGE SCALE GENOMIC DNA]</scope>
    <source>
        <strain>RML369-C</strain>
    </source>
</reference>
<protein>
    <recommendedName>
        <fullName>Bifunctional methyltransferase</fullName>
    </recommendedName>
    <domain>
        <recommendedName>
            <fullName>Release factor glutamine methyltransferase</fullName>
            <shortName>RF MTase</shortName>
            <ecNumber>2.1.1.297</ecNumber>
        </recommendedName>
        <alternativeName>
            <fullName>N5-glutamine methyltransferase PrmC</fullName>
        </alternativeName>
        <alternativeName>
            <fullName>Protein-(glutamine-N5) MTase PrmC</fullName>
        </alternativeName>
        <alternativeName>
            <fullName>Protein-glutamine N-methyltransferase PrmC</fullName>
        </alternativeName>
    </domain>
    <domain>
        <recommendedName>
            <fullName>tRNA (guanine-N(7)-)-methyltransferase</fullName>
            <ecNumber>2.1.1.33</ecNumber>
        </recommendedName>
        <alternativeName>
            <fullName>tRNA (guanine(46)-N(7))-methyltransferase</fullName>
        </alternativeName>
        <alternativeName>
            <fullName>tRNA(m7G46)-methyltransferase</fullName>
        </alternativeName>
    </domain>
</protein>
<name>RFTRM_RICBR</name>
<keyword id="KW-0489">Methyltransferase</keyword>
<keyword id="KW-0949">S-adenosyl-L-methionine</keyword>
<keyword id="KW-0808">Transferase</keyword>
<keyword id="KW-0819">tRNA processing</keyword>
<proteinExistence type="inferred from homology"/>
<accession>Q1RH40</accession>
<feature type="chain" id="PRO_0000288434" description="Bifunctional methyltransferase">
    <location>
        <begin position="1"/>
        <end position="556"/>
    </location>
</feature>
<feature type="region of interest" description="RF MTase">
    <location>
        <begin position="1"/>
        <end position="310"/>
    </location>
</feature>
<feature type="region of interest" description="tRNA MTase">
    <location>
        <begin position="313"/>
        <end position="556"/>
    </location>
</feature>
<feature type="region of interest" description="Insert">
    <location>
        <begin position="348"/>
        <end position="399"/>
    </location>
</feature>
<feature type="active site" evidence="1">
    <location>
        <position position="477"/>
    </location>
</feature>
<feature type="binding site" evidence="1">
    <location>
        <begin position="148"/>
        <end position="152"/>
    </location>
    <ligand>
        <name>S-adenosyl-L-methionine</name>
        <dbReference type="ChEBI" id="CHEBI:59789"/>
    </ligand>
</feature>
<feature type="binding site" evidence="1">
    <location>
        <position position="171"/>
    </location>
    <ligand>
        <name>S-adenosyl-L-methionine</name>
        <dbReference type="ChEBI" id="CHEBI:59789"/>
    </ligand>
</feature>
<feature type="binding site" evidence="1">
    <location>
        <position position="200"/>
    </location>
    <ligand>
        <name>S-adenosyl-L-methionine</name>
        <dbReference type="ChEBI" id="CHEBI:59789"/>
    </ligand>
</feature>
<feature type="binding site" evidence="1">
    <location>
        <begin position="215"/>
        <end position="218"/>
    </location>
    <ligand>
        <name>substrate</name>
    </ligand>
</feature>
<feature type="binding site" evidence="1">
    <location>
        <position position="215"/>
    </location>
    <ligand>
        <name>S-adenosyl-L-methionine</name>
        <dbReference type="ChEBI" id="CHEBI:59789"/>
    </ligand>
</feature>
<feature type="binding site" evidence="1">
    <location>
        <position position="403"/>
    </location>
    <ligand>
        <name>S-adenosyl-L-methionine</name>
        <dbReference type="ChEBI" id="CHEBI:59789"/>
    </ligand>
</feature>
<feature type="binding site" evidence="1">
    <location>
        <position position="428"/>
    </location>
    <ligand>
        <name>S-adenosyl-L-methionine</name>
        <dbReference type="ChEBI" id="CHEBI:59789"/>
    </ligand>
</feature>
<feature type="binding site" evidence="1">
    <location>
        <position position="455"/>
    </location>
    <ligand>
        <name>S-adenosyl-L-methionine</name>
        <dbReference type="ChEBI" id="CHEBI:59789"/>
    </ligand>
</feature>
<feature type="binding site" evidence="1">
    <location>
        <position position="477"/>
    </location>
    <ligand>
        <name>S-adenosyl-L-methionine</name>
        <dbReference type="ChEBI" id="CHEBI:59789"/>
    </ligand>
</feature>
<feature type="binding site" evidence="1">
    <location>
        <position position="481"/>
    </location>
    <ligand>
        <name>substrate</name>
    </ligand>
</feature>
<feature type="binding site" evidence="1">
    <location>
        <position position="513"/>
    </location>
    <ligand>
        <name>substrate</name>
    </ligand>
</feature>